<keyword id="KW-1003">Cell membrane</keyword>
<keyword id="KW-0407">Ion channel</keyword>
<keyword id="KW-0406">Ion transport</keyword>
<keyword id="KW-0472">Membrane</keyword>
<keyword id="KW-0479">Metal-binding</keyword>
<keyword id="KW-0915">Sodium</keyword>
<keyword id="KW-0812">Transmembrane</keyword>
<keyword id="KW-1133">Transmembrane helix</keyword>
<keyword id="KW-0813">Transport</keyword>
<organism>
    <name type="scientific">Clostridium perfringens (strain ATCC 13124 / DSM 756 / JCM 1290 / NCIMB 6125 / NCTC 8237 / Type A)</name>
    <dbReference type="NCBI Taxonomy" id="195103"/>
    <lineage>
        <taxon>Bacteria</taxon>
        <taxon>Bacillati</taxon>
        <taxon>Bacillota</taxon>
        <taxon>Clostridia</taxon>
        <taxon>Eubacteriales</taxon>
        <taxon>Clostridiaceae</taxon>
        <taxon>Clostridium</taxon>
    </lineage>
</organism>
<accession>Q0TRL0</accession>
<reference key="1">
    <citation type="journal article" date="2006" name="Genome Res.">
        <title>Skewed genomic variability in strains of the toxigenic bacterial pathogen, Clostridium perfringens.</title>
        <authorList>
            <person name="Myers G.S.A."/>
            <person name="Rasko D.A."/>
            <person name="Cheung J.K."/>
            <person name="Ravel J."/>
            <person name="Seshadri R."/>
            <person name="DeBoy R.T."/>
            <person name="Ren Q."/>
            <person name="Varga J."/>
            <person name="Awad M.M."/>
            <person name="Brinkac L.M."/>
            <person name="Daugherty S.C."/>
            <person name="Haft D.H."/>
            <person name="Dodson R.J."/>
            <person name="Madupu R."/>
            <person name="Nelson W.C."/>
            <person name="Rosovitz M.J."/>
            <person name="Sullivan S.A."/>
            <person name="Khouri H."/>
            <person name="Dimitrov G.I."/>
            <person name="Watkins K.L."/>
            <person name="Mulligan S."/>
            <person name="Benton J."/>
            <person name="Radune D."/>
            <person name="Fisher D.J."/>
            <person name="Atkins H.S."/>
            <person name="Hiscox T."/>
            <person name="Jost B.H."/>
            <person name="Billington S.J."/>
            <person name="Songer J.G."/>
            <person name="McClane B.A."/>
            <person name="Titball R.W."/>
            <person name="Rood J.I."/>
            <person name="Melville S.B."/>
            <person name="Paulsen I.T."/>
        </authorList>
    </citation>
    <scope>NUCLEOTIDE SEQUENCE [LARGE SCALE GENOMIC DNA]</scope>
    <source>
        <strain>ATCC 13124 / DSM 756 / JCM 1290 / NCIMB 6125 / NCTC 8237 / S 107 / Type A</strain>
    </source>
</reference>
<feature type="chain" id="PRO_1000026382" description="Fluoride-specific ion channel FluC">
    <location>
        <begin position="1"/>
        <end position="128"/>
    </location>
</feature>
<feature type="transmembrane region" description="Helical" evidence="1">
    <location>
        <begin position="4"/>
        <end position="24"/>
    </location>
</feature>
<feature type="transmembrane region" description="Helical" evidence="1">
    <location>
        <begin position="39"/>
        <end position="59"/>
    </location>
</feature>
<feature type="transmembrane region" description="Helical" evidence="1">
    <location>
        <begin position="71"/>
        <end position="91"/>
    </location>
</feature>
<feature type="transmembrane region" description="Helical" evidence="1">
    <location>
        <begin position="99"/>
        <end position="119"/>
    </location>
</feature>
<feature type="binding site" evidence="1">
    <location>
        <position position="78"/>
    </location>
    <ligand>
        <name>Na(+)</name>
        <dbReference type="ChEBI" id="CHEBI:29101"/>
        <note>structural</note>
    </ligand>
</feature>
<feature type="binding site" evidence="1">
    <location>
        <position position="81"/>
    </location>
    <ligand>
        <name>Na(+)</name>
        <dbReference type="ChEBI" id="CHEBI:29101"/>
        <note>structural</note>
    </ligand>
</feature>
<comment type="function">
    <text evidence="1">Fluoride-specific ion channel. Important for reducing fluoride concentration in the cell, thus reducing its toxicity.</text>
</comment>
<comment type="catalytic activity">
    <reaction evidence="1">
        <text>fluoride(in) = fluoride(out)</text>
        <dbReference type="Rhea" id="RHEA:76159"/>
        <dbReference type="ChEBI" id="CHEBI:17051"/>
    </reaction>
    <physiologicalReaction direction="left-to-right" evidence="1">
        <dbReference type="Rhea" id="RHEA:76160"/>
    </physiologicalReaction>
</comment>
<comment type="activity regulation">
    <text evidence="1">Na(+) is not transported, but it plays an essential structural role and its presence is essential for fluoride channel function.</text>
</comment>
<comment type="subcellular location">
    <subcellularLocation>
        <location evidence="1">Cell membrane</location>
        <topology evidence="1">Multi-pass membrane protein</topology>
    </subcellularLocation>
</comment>
<comment type="similarity">
    <text evidence="1">Belongs to the fluoride channel Fluc/FEX (TC 1.A.43) family.</text>
</comment>
<protein>
    <recommendedName>
        <fullName evidence="1">Fluoride-specific ion channel FluC</fullName>
    </recommendedName>
</protein>
<name>FLUC_CLOP1</name>
<gene>
    <name evidence="1" type="primary">fluC</name>
    <name evidence="1" type="synonym">crcB</name>
    <name type="ordered locus">CPF_1284</name>
</gene>
<evidence type="ECO:0000255" key="1">
    <source>
        <dbReference type="HAMAP-Rule" id="MF_00454"/>
    </source>
</evidence>
<proteinExistence type="inferred from homology"/>
<dbReference type="EMBL" id="CP000246">
    <property type="protein sequence ID" value="ABG83383.1"/>
    <property type="molecule type" value="Genomic_DNA"/>
</dbReference>
<dbReference type="RefSeq" id="WP_003458613.1">
    <property type="nucleotide sequence ID" value="NC_008261.1"/>
</dbReference>
<dbReference type="SMR" id="Q0TRL0"/>
<dbReference type="STRING" id="195103.CPF_1284"/>
<dbReference type="PaxDb" id="195103-CPF_1284"/>
<dbReference type="GeneID" id="93002402"/>
<dbReference type="KEGG" id="cpf:CPF_1284"/>
<dbReference type="eggNOG" id="COG0239">
    <property type="taxonomic scope" value="Bacteria"/>
</dbReference>
<dbReference type="HOGENOM" id="CLU_114342_3_2_9"/>
<dbReference type="Proteomes" id="UP000001823">
    <property type="component" value="Chromosome"/>
</dbReference>
<dbReference type="GO" id="GO:0005886">
    <property type="term" value="C:plasma membrane"/>
    <property type="evidence" value="ECO:0007669"/>
    <property type="project" value="UniProtKB-SubCell"/>
</dbReference>
<dbReference type="GO" id="GO:0062054">
    <property type="term" value="F:fluoride channel activity"/>
    <property type="evidence" value="ECO:0007669"/>
    <property type="project" value="UniProtKB-UniRule"/>
</dbReference>
<dbReference type="GO" id="GO:0046872">
    <property type="term" value="F:metal ion binding"/>
    <property type="evidence" value="ECO:0007669"/>
    <property type="project" value="UniProtKB-KW"/>
</dbReference>
<dbReference type="GO" id="GO:0140114">
    <property type="term" value="P:cellular detoxification of fluoride"/>
    <property type="evidence" value="ECO:0007669"/>
    <property type="project" value="UniProtKB-UniRule"/>
</dbReference>
<dbReference type="HAMAP" id="MF_00454">
    <property type="entry name" value="FluC"/>
    <property type="match status" value="1"/>
</dbReference>
<dbReference type="InterPro" id="IPR003691">
    <property type="entry name" value="FluC"/>
</dbReference>
<dbReference type="InterPro" id="IPR036280">
    <property type="entry name" value="Multihaem_cyt_sf"/>
</dbReference>
<dbReference type="NCBIfam" id="TIGR00494">
    <property type="entry name" value="crcB"/>
    <property type="match status" value="1"/>
</dbReference>
<dbReference type="PANTHER" id="PTHR28259">
    <property type="entry name" value="FLUORIDE EXPORT PROTEIN 1-RELATED"/>
    <property type="match status" value="1"/>
</dbReference>
<dbReference type="PANTHER" id="PTHR28259:SF1">
    <property type="entry name" value="FLUORIDE EXPORT PROTEIN 1-RELATED"/>
    <property type="match status" value="1"/>
</dbReference>
<dbReference type="Pfam" id="PF02537">
    <property type="entry name" value="CRCB"/>
    <property type="match status" value="1"/>
</dbReference>
<dbReference type="SUPFAM" id="SSF48695">
    <property type="entry name" value="Multiheme cytochromes"/>
    <property type="match status" value="1"/>
</dbReference>
<sequence length="128" mass="13696">MQKLLLALIVGLGGFLGASLRYLISIFAAKNFGGNFPYGTLIANILGALLIGFIMEFSMDSALISSNMKLFLTTGIMGGLTTFSTFSYETISMLTNGNITLGIENIILNLGCSLLFVVIGQKLARILF</sequence>